<protein>
    <recommendedName>
        <fullName>Probable kinetochore protein spc24</fullName>
    </recommendedName>
</protein>
<sequence length="200" mass="22876">MLLDENPGTLIHHTIGNFNIQPDKQAVTRINDSLSTLQQSRELRMREAESSLRKLSRHLHSLNAQHEEAVAAHDSSKHAADMVELDTKKFRIAKAATELEIESERLESELEMLKERLADLEAQGLEGDEATRRERELDDATILRLKIYRSLGVDIEADDAGNFNKAVIRNSRKGDVHVVNIDPKFSRFFYSNYFWSTMQG</sequence>
<comment type="function">
    <text evidence="1">Acts as a component of the essential kinetochore-associated NDC80 complex, which is required for chromosome segregation and spindle checkpoint activity.</text>
</comment>
<comment type="subunit">
    <text evidence="1">Component of the NDC80 complex, which consists of ndc80, nuf2, spc24 and spc25.</text>
</comment>
<comment type="subcellular location">
    <subcellularLocation>
        <location evidence="2">Nucleus</location>
    </subcellularLocation>
    <subcellularLocation>
        <location evidence="2">Chromosome</location>
        <location evidence="2">Centromere</location>
        <location evidence="2">Kinetochore</location>
    </subcellularLocation>
    <subcellularLocation>
        <location evidence="2">Cytoplasm</location>
        <location evidence="2">Cytoskeleton</location>
        <location evidence="2">Microtubule organizing center</location>
        <location evidence="2">Spindle pole body</location>
    </subcellularLocation>
    <text evidence="2">Associated with kinetochores.</text>
</comment>
<comment type="similarity">
    <text evidence="4">Belongs to the SPC24 family.</text>
</comment>
<organism>
    <name type="scientific">Aspergillus oryzae (strain ATCC 42149 / RIB 40)</name>
    <name type="common">Yellow koji mold</name>
    <dbReference type="NCBI Taxonomy" id="510516"/>
    <lineage>
        <taxon>Eukaryota</taxon>
        <taxon>Fungi</taxon>
        <taxon>Dikarya</taxon>
        <taxon>Ascomycota</taxon>
        <taxon>Pezizomycotina</taxon>
        <taxon>Eurotiomycetes</taxon>
        <taxon>Eurotiomycetidae</taxon>
        <taxon>Eurotiales</taxon>
        <taxon>Aspergillaceae</taxon>
        <taxon>Aspergillus</taxon>
        <taxon>Aspergillus subgen. Circumdati</taxon>
    </lineage>
</organism>
<evidence type="ECO:0000250" key="1"/>
<evidence type="ECO:0000250" key="2">
    <source>
        <dbReference type="UniProtKB" id="Q9UST6"/>
    </source>
</evidence>
<evidence type="ECO:0000255" key="3"/>
<evidence type="ECO:0000305" key="4"/>
<name>SPC24_ASPOR</name>
<gene>
    <name type="primary">spc24</name>
    <name type="ORF">AO090026000295</name>
</gene>
<feature type="chain" id="PRO_0000246659" description="Probable kinetochore protein spc24">
    <location>
        <begin position="1"/>
        <end position="200"/>
    </location>
</feature>
<feature type="coiled-coil region" evidence="3">
    <location>
        <begin position="42"/>
        <end position="129"/>
    </location>
</feature>
<dbReference type="EMBL" id="BA000051">
    <property type="protein sequence ID" value="BAE59770.1"/>
    <property type="molecule type" value="Genomic_DNA"/>
</dbReference>
<dbReference type="RefSeq" id="XP_001821772.1">
    <property type="nucleotide sequence ID" value="XM_001821720.2"/>
</dbReference>
<dbReference type="SMR" id="Q2UF95"/>
<dbReference type="STRING" id="510516.Q2UF95"/>
<dbReference type="EnsemblFungi" id="BAE59770">
    <property type="protein sequence ID" value="BAE59770"/>
    <property type="gene ID" value="AO090026000295"/>
</dbReference>
<dbReference type="GeneID" id="5993800"/>
<dbReference type="KEGG" id="aor:AO090026000295"/>
<dbReference type="VEuPathDB" id="FungiDB:AO090026000295"/>
<dbReference type="HOGENOM" id="CLU_091441_1_0_1"/>
<dbReference type="OMA" id="AQCTSHF"/>
<dbReference type="OrthoDB" id="103508at5052"/>
<dbReference type="Proteomes" id="UP000006564">
    <property type="component" value="Chromosome 3"/>
</dbReference>
<dbReference type="GO" id="GO:0005737">
    <property type="term" value="C:cytoplasm"/>
    <property type="evidence" value="ECO:0007669"/>
    <property type="project" value="UniProtKB-KW"/>
</dbReference>
<dbReference type="GO" id="GO:0031262">
    <property type="term" value="C:Ndc80 complex"/>
    <property type="evidence" value="ECO:0000250"/>
    <property type="project" value="UniProtKB"/>
</dbReference>
<dbReference type="GO" id="GO:0005634">
    <property type="term" value="C:nucleus"/>
    <property type="evidence" value="ECO:0007669"/>
    <property type="project" value="UniProtKB-SubCell"/>
</dbReference>
<dbReference type="GO" id="GO:0005816">
    <property type="term" value="C:spindle pole body"/>
    <property type="evidence" value="ECO:0007669"/>
    <property type="project" value="UniProtKB-SubCell"/>
</dbReference>
<dbReference type="GO" id="GO:0008017">
    <property type="term" value="F:microtubule binding"/>
    <property type="evidence" value="ECO:0007669"/>
    <property type="project" value="TreeGrafter"/>
</dbReference>
<dbReference type="GO" id="GO:0051301">
    <property type="term" value="P:cell division"/>
    <property type="evidence" value="ECO:0007669"/>
    <property type="project" value="UniProtKB-KW"/>
</dbReference>
<dbReference type="GO" id="GO:0031134">
    <property type="term" value="P:sister chromatid biorientation"/>
    <property type="evidence" value="ECO:0000250"/>
    <property type="project" value="UniProtKB"/>
</dbReference>
<dbReference type="CDD" id="cd11565">
    <property type="entry name" value="RWD_Spc24"/>
    <property type="match status" value="1"/>
</dbReference>
<dbReference type="Gene3D" id="3.30.160.430">
    <property type="match status" value="1"/>
</dbReference>
<dbReference type="InterPro" id="IPR013252">
    <property type="entry name" value="Ndc80_Spc24"/>
</dbReference>
<dbReference type="InterPro" id="IPR038066">
    <property type="entry name" value="Spc24_Fungi_globular_sf"/>
</dbReference>
<dbReference type="PANTHER" id="PTHR22142">
    <property type="match status" value="1"/>
</dbReference>
<dbReference type="PANTHER" id="PTHR22142:SF2">
    <property type="entry name" value="KINETOCHORE PROTEIN SPC24"/>
    <property type="match status" value="1"/>
</dbReference>
<dbReference type="Pfam" id="PF08286">
    <property type="entry name" value="Spc24"/>
    <property type="match status" value="1"/>
</dbReference>
<dbReference type="SUPFAM" id="SSF143026">
    <property type="entry name" value="Kinetochore globular domain"/>
    <property type="match status" value="1"/>
</dbReference>
<keyword id="KW-0131">Cell cycle</keyword>
<keyword id="KW-0132">Cell division</keyword>
<keyword id="KW-0137">Centromere</keyword>
<keyword id="KW-0158">Chromosome</keyword>
<keyword id="KW-0175">Coiled coil</keyword>
<keyword id="KW-0963">Cytoplasm</keyword>
<keyword id="KW-0206">Cytoskeleton</keyword>
<keyword id="KW-0995">Kinetochore</keyword>
<keyword id="KW-0498">Mitosis</keyword>
<keyword id="KW-0539">Nucleus</keyword>
<keyword id="KW-1185">Reference proteome</keyword>
<reference key="1">
    <citation type="journal article" date="2005" name="Nature">
        <title>Genome sequencing and analysis of Aspergillus oryzae.</title>
        <authorList>
            <person name="Machida M."/>
            <person name="Asai K."/>
            <person name="Sano M."/>
            <person name="Tanaka T."/>
            <person name="Kumagai T."/>
            <person name="Terai G."/>
            <person name="Kusumoto K."/>
            <person name="Arima T."/>
            <person name="Akita O."/>
            <person name="Kashiwagi Y."/>
            <person name="Abe K."/>
            <person name="Gomi K."/>
            <person name="Horiuchi H."/>
            <person name="Kitamoto K."/>
            <person name="Kobayashi T."/>
            <person name="Takeuchi M."/>
            <person name="Denning D.W."/>
            <person name="Galagan J.E."/>
            <person name="Nierman W.C."/>
            <person name="Yu J."/>
            <person name="Archer D.B."/>
            <person name="Bennett J.W."/>
            <person name="Bhatnagar D."/>
            <person name="Cleveland T.E."/>
            <person name="Fedorova N.D."/>
            <person name="Gotoh O."/>
            <person name="Horikawa H."/>
            <person name="Hosoyama A."/>
            <person name="Ichinomiya M."/>
            <person name="Igarashi R."/>
            <person name="Iwashita K."/>
            <person name="Juvvadi P.R."/>
            <person name="Kato M."/>
            <person name="Kato Y."/>
            <person name="Kin T."/>
            <person name="Kokubun A."/>
            <person name="Maeda H."/>
            <person name="Maeyama N."/>
            <person name="Maruyama J."/>
            <person name="Nagasaki H."/>
            <person name="Nakajima T."/>
            <person name="Oda K."/>
            <person name="Okada K."/>
            <person name="Paulsen I."/>
            <person name="Sakamoto K."/>
            <person name="Sawano T."/>
            <person name="Takahashi M."/>
            <person name="Takase K."/>
            <person name="Terabayashi Y."/>
            <person name="Wortman J.R."/>
            <person name="Yamada O."/>
            <person name="Yamagata Y."/>
            <person name="Anazawa H."/>
            <person name="Hata Y."/>
            <person name="Koide Y."/>
            <person name="Komori T."/>
            <person name="Koyama Y."/>
            <person name="Minetoki T."/>
            <person name="Suharnan S."/>
            <person name="Tanaka A."/>
            <person name="Isono K."/>
            <person name="Kuhara S."/>
            <person name="Ogasawara N."/>
            <person name="Kikuchi H."/>
        </authorList>
    </citation>
    <scope>NUCLEOTIDE SEQUENCE [LARGE SCALE GENOMIC DNA]</scope>
    <source>
        <strain>ATCC 42149 / RIB 40</strain>
    </source>
</reference>
<proteinExistence type="inferred from homology"/>
<accession>Q2UF95</accession>